<comment type="function">
    <text evidence="1">Catalyzes the coenzyme F420-dependent oxidation of glucose 6-phosphate (G6P) to 6-phosphogluconolactone.</text>
</comment>
<comment type="catalytic activity">
    <reaction evidence="1">
        <text>oxidized coenzyme F420-(gamma-L-Glu)(n) + D-glucose 6-phosphate + H(+) = 6-phospho-D-glucono-1,5-lactone + reduced coenzyme F420-(gamma-L-Glu)(n)</text>
        <dbReference type="Rhea" id="RHEA:27294"/>
        <dbReference type="Rhea" id="RHEA-COMP:12939"/>
        <dbReference type="Rhea" id="RHEA-COMP:14378"/>
        <dbReference type="ChEBI" id="CHEBI:15378"/>
        <dbReference type="ChEBI" id="CHEBI:57955"/>
        <dbReference type="ChEBI" id="CHEBI:61548"/>
        <dbReference type="ChEBI" id="CHEBI:133980"/>
        <dbReference type="ChEBI" id="CHEBI:139511"/>
        <dbReference type="EC" id="1.1.98.2"/>
    </reaction>
</comment>
<comment type="subunit">
    <text evidence="1">Homodimer.</text>
</comment>
<comment type="similarity">
    <text evidence="1">Belongs to the F420-dependent glucose-6-phosphate dehydrogenase family.</text>
</comment>
<proteinExistence type="inferred from homology"/>
<evidence type="ECO:0000255" key="1">
    <source>
        <dbReference type="HAMAP-Rule" id="MF_02123"/>
    </source>
</evidence>
<sequence>MAQELKLGYKASAEQFGPRELVELAVLAEQHGMDSVAVSDHFQPWRHNGGHAPFSLAWMTAVGERTERVQIGTSVMTPTFRYNPAVIAQAFATMGCLYPGRIMLGVGSGEALNEIATGFQGEWPEFKERFARLRESVRLMRELWLGDRVDFEGEYFTTRGASIYDVPEGGIPVYIAAGGPVVARYAGRAGDGFICTSGKGMELYTEKLLPAVAEGAAKAERDVADIDKMIEIKISYDTDPEAALENTRFWAPLSLTPEQKHSIEDPIEMEAAADALPIEQVAKRWIVASDPDDAVEQVKAYVDAGLNHLVFHAPGHDQRRFLELFERDLAPRLRALG</sequence>
<accession>C0ZUD4</accession>
<organism>
    <name type="scientific">Rhodococcus erythropolis (strain PR4 / NBRC 100887)</name>
    <dbReference type="NCBI Taxonomy" id="234621"/>
    <lineage>
        <taxon>Bacteria</taxon>
        <taxon>Bacillati</taxon>
        <taxon>Actinomycetota</taxon>
        <taxon>Actinomycetes</taxon>
        <taxon>Mycobacteriales</taxon>
        <taxon>Nocardiaceae</taxon>
        <taxon>Rhodococcus</taxon>
        <taxon>Rhodococcus erythropolis group</taxon>
    </lineage>
</organism>
<gene>
    <name evidence="1" type="primary">fgd</name>
    <name type="ordered locus">RER_14710</name>
</gene>
<protein>
    <recommendedName>
        <fullName evidence="1">F420-dependent glucose-6-phosphate dehydrogenase</fullName>
        <shortName evidence="1">FGD</shortName>
        <shortName evidence="1">G6PD</shortName>
        <ecNumber evidence="1">1.1.98.2</ecNumber>
    </recommendedName>
</protein>
<name>FGD_RHOE4</name>
<keyword id="KW-0119">Carbohydrate metabolism</keyword>
<keyword id="KW-0560">Oxidoreductase</keyword>
<feature type="chain" id="PRO_0000413600" description="F420-dependent glucose-6-phosphate dehydrogenase">
    <location>
        <begin position="1"/>
        <end position="337"/>
    </location>
</feature>
<feature type="active site" description="Proton donor" evidence="1">
    <location>
        <position position="41"/>
    </location>
</feature>
<feature type="active site" description="Proton acceptor" evidence="1">
    <location>
        <position position="110"/>
    </location>
</feature>
<feature type="binding site" evidence="1">
    <location>
        <position position="40"/>
    </location>
    <ligand>
        <name>coenzyme F420-(gamma-Glu)n</name>
        <dbReference type="ChEBI" id="CHEBI:133980"/>
    </ligand>
</feature>
<feature type="binding site" evidence="1">
    <location>
        <position position="77"/>
    </location>
    <ligand>
        <name>coenzyme F420-(gamma-Glu)n</name>
        <dbReference type="ChEBI" id="CHEBI:133980"/>
    </ligand>
</feature>
<feature type="binding site" evidence="1">
    <location>
        <begin position="108"/>
        <end position="109"/>
    </location>
    <ligand>
        <name>coenzyme F420-(gamma-Glu)n</name>
        <dbReference type="ChEBI" id="CHEBI:133980"/>
    </ligand>
</feature>
<feature type="binding site" evidence="1">
    <location>
        <position position="113"/>
    </location>
    <ligand>
        <name>coenzyme F420-(gamma-Glu)n</name>
        <dbReference type="ChEBI" id="CHEBI:133980"/>
    </ligand>
</feature>
<feature type="binding site" evidence="1">
    <location>
        <begin position="178"/>
        <end position="179"/>
    </location>
    <ligand>
        <name>coenzyme F420-(gamma-Glu)n</name>
        <dbReference type="ChEBI" id="CHEBI:133980"/>
    </ligand>
</feature>
<feature type="binding site" evidence="1">
    <location>
        <begin position="181"/>
        <end position="182"/>
    </location>
    <ligand>
        <name>coenzyme F420-(gamma-Glu)n</name>
        <dbReference type="ChEBI" id="CHEBI:133980"/>
    </ligand>
</feature>
<feature type="binding site" evidence="1">
    <location>
        <position position="196"/>
    </location>
    <ligand>
        <name>substrate</name>
    </ligand>
</feature>
<feature type="binding site" evidence="1">
    <location>
        <position position="199"/>
    </location>
    <ligand>
        <name>substrate</name>
    </ligand>
</feature>
<feature type="binding site" evidence="1">
    <location>
        <position position="260"/>
    </location>
    <ligand>
        <name>substrate</name>
    </ligand>
</feature>
<feature type="binding site" evidence="1">
    <location>
        <position position="284"/>
    </location>
    <ligand>
        <name>substrate</name>
    </ligand>
</feature>
<dbReference type="EC" id="1.1.98.2" evidence="1"/>
<dbReference type="EMBL" id="AP008957">
    <property type="protein sequence ID" value="BAH32179.1"/>
    <property type="molecule type" value="Genomic_DNA"/>
</dbReference>
<dbReference type="RefSeq" id="WP_003944371.1">
    <property type="nucleotide sequence ID" value="NC_012490.1"/>
</dbReference>
<dbReference type="SMR" id="C0ZUD4"/>
<dbReference type="GeneID" id="93802007"/>
<dbReference type="KEGG" id="rer:RER_14710"/>
<dbReference type="eggNOG" id="COG2141">
    <property type="taxonomic scope" value="Bacteria"/>
</dbReference>
<dbReference type="HOGENOM" id="CLU_027853_4_0_11"/>
<dbReference type="Proteomes" id="UP000002204">
    <property type="component" value="Chromosome"/>
</dbReference>
<dbReference type="GO" id="GO:0070967">
    <property type="term" value="F:coenzyme F420 binding"/>
    <property type="evidence" value="ECO:0007669"/>
    <property type="project" value="UniProtKB-UniRule"/>
</dbReference>
<dbReference type="GO" id="GO:0052749">
    <property type="term" value="F:glucose-6-phosphate dehydrogenase (coenzyme F420) activity"/>
    <property type="evidence" value="ECO:0007669"/>
    <property type="project" value="UniProtKB-EC"/>
</dbReference>
<dbReference type="GO" id="GO:0016705">
    <property type="term" value="F:oxidoreductase activity, acting on paired donors, with incorporation or reduction of molecular oxygen"/>
    <property type="evidence" value="ECO:0007669"/>
    <property type="project" value="InterPro"/>
</dbReference>
<dbReference type="GO" id="GO:0005975">
    <property type="term" value="P:carbohydrate metabolic process"/>
    <property type="evidence" value="ECO:0007669"/>
    <property type="project" value="UniProtKB-UniRule"/>
</dbReference>
<dbReference type="CDD" id="cd01097">
    <property type="entry name" value="Tetrahydromethanopterin_reductase"/>
    <property type="match status" value="1"/>
</dbReference>
<dbReference type="Gene3D" id="3.20.20.30">
    <property type="entry name" value="Luciferase-like domain"/>
    <property type="match status" value="1"/>
</dbReference>
<dbReference type="HAMAP" id="MF_02123">
    <property type="entry name" value="F420_G6P_DH"/>
    <property type="match status" value="1"/>
</dbReference>
<dbReference type="InterPro" id="IPR019944">
    <property type="entry name" value="F420-dep_G6P_DH"/>
</dbReference>
<dbReference type="InterPro" id="IPR050564">
    <property type="entry name" value="F420-G6PD/mer"/>
</dbReference>
<dbReference type="InterPro" id="IPR019945">
    <property type="entry name" value="F420_G6P_DH-rel"/>
</dbReference>
<dbReference type="InterPro" id="IPR011251">
    <property type="entry name" value="Luciferase-like_dom"/>
</dbReference>
<dbReference type="InterPro" id="IPR036661">
    <property type="entry name" value="Luciferase-like_sf"/>
</dbReference>
<dbReference type="NCBIfam" id="TIGR03554">
    <property type="entry name" value="F420_G6P_DH"/>
    <property type="match status" value="1"/>
</dbReference>
<dbReference type="NCBIfam" id="TIGR03557">
    <property type="entry name" value="F420_G6P_family"/>
    <property type="match status" value="1"/>
</dbReference>
<dbReference type="PANTHER" id="PTHR43244">
    <property type="match status" value="1"/>
</dbReference>
<dbReference type="PANTHER" id="PTHR43244:SF1">
    <property type="entry name" value="5,10-METHYLENETETRAHYDROMETHANOPTERIN REDUCTASE"/>
    <property type="match status" value="1"/>
</dbReference>
<dbReference type="Pfam" id="PF00296">
    <property type="entry name" value="Bac_luciferase"/>
    <property type="match status" value="1"/>
</dbReference>
<dbReference type="SUPFAM" id="SSF51679">
    <property type="entry name" value="Bacterial luciferase-like"/>
    <property type="match status" value="1"/>
</dbReference>
<reference key="1">
    <citation type="submission" date="2005-03" db="EMBL/GenBank/DDBJ databases">
        <title>Comparison of the complete genome sequences of Rhodococcus erythropolis PR4 and Rhodococcus opacus B4.</title>
        <authorList>
            <person name="Takarada H."/>
            <person name="Sekine M."/>
            <person name="Hosoyama A."/>
            <person name="Yamada R."/>
            <person name="Fujisawa T."/>
            <person name="Omata S."/>
            <person name="Shimizu A."/>
            <person name="Tsukatani N."/>
            <person name="Tanikawa S."/>
            <person name="Fujita N."/>
            <person name="Harayama S."/>
        </authorList>
    </citation>
    <scope>NUCLEOTIDE SEQUENCE [LARGE SCALE GENOMIC DNA]</scope>
    <source>
        <strain>PR4 / NBRC 100887</strain>
    </source>
</reference>